<dbReference type="EMBL" id="L42023">
    <property type="protein sequence ID" value="AAC22670.1"/>
    <property type="molecule type" value="Genomic_DNA"/>
</dbReference>
<dbReference type="PIR" id="A64108">
    <property type="entry name" value="A64108"/>
</dbReference>
<dbReference type="RefSeq" id="NP_439170.1">
    <property type="nucleotide sequence ID" value="NC_000907.1"/>
</dbReference>
<dbReference type="SMR" id="P44978"/>
<dbReference type="STRING" id="71421.HI_1009"/>
<dbReference type="EnsemblBacteria" id="AAC22670">
    <property type="protein sequence ID" value="AAC22670"/>
    <property type="gene ID" value="HI_1009"/>
</dbReference>
<dbReference type="KEGG" id="hin:HI_1009"/>
<dbReference type="PATRIC" id="fig|71421.8.peg.1053"/>
<dbReference type="eggNOG" id="COG1349">
    <property type="taxonomic scope" value="Bacteria"/>
</dbReference>
<dbReference type="HOGENOM" id="CLU_060699_1_4_6"/>
<dbReference type="OrthoDB" id="5685843at2"/>
<dbReference type="PhylomeDB" id="P44978"/>
<dbReference type="BioCyc" id="HINF71421:G1GJ1-1049-MONOMER"/>
<dbReference type="Proteomes" id="UP000000579">
    <property type="component" value="Chromosome"/>
</dbReference>
<dbReference type="GO" id="GO:0000987">
    <property type="term" value="F:cis-regulatory region sequence-specific DNA binding"/>
    <property type="evidence" value="ECO:0000318"/>
    <property type="project" value="GO_Central"/>
</dbReference>
<dbReference type="GO" id="GO:0098531">
    <property type="term" value="F:ligand-modulated transcription factor activity"/>
    <property type="evidence" value="ECO:0000318"/>
    <property type="project" value="GO_Central"/>
</dbReference>
<dbReference type="GO" id="GO:0006355">
    <property type="term" value="P:regulation of DNA-templated transcription"/>
    <property type="evidence" value="ECO:0000318"/>
    <property type="project" value="GO_Central"/>
</dbReference>
<dbReference type="Gene3D" id="3.40.50.1360">
    <property type="match status" value="1"/>
</dbReference>
<dbReference type="Gene3D" id="1.10.10.10">
    <property type="entry name" value="Winged helix-like DNA-binding domain superfamily/Winged helix DNA-binding domain"/>
    <property type="match status" value="1"/>
</dbReference>
<dbReference type="InterPro" id="IPR050313">
    <property type="entry name" value="Carb_Metab_HTH_regulators"/>
</dbReference>
<dbReference type="InterPro" id="IPR014036">
    <property type="entry name" value="DeoR-like_C"/>
</dbReference>
<dbReference type="InterPro" id="IPR001034">
    <property type="entry name" value="DeoR_HTH"/>
</dbReference>
<dbReference type="InterPro" id="IPR037171">
    <property type="entry name" value="NagB/RpiA_transferase-like"/>
</dbReference>
<dbReference type="InterPro" id="IPR018356">
    <property type="entry name" value="Tscrpt_reg_HTH_DeoR_CS"/>
</dbReference>
<dbReference type="InterPro" id="IPR036388">
    <property type="entry name" value="WH-like_DNA-bd_sf"/>
</dbReference>
<dbReference type="InterPro" id="IPR036390">
    <property type="entry name" value="WH_DNA-bd_sf"/>
</dbReference>
<dbReference type="PANTHER" id="PTHR30363">
    <property type="entry name" value="HTH-TYPE TRANSCRIPTIONAL REGULATOR SRLR-RELATED"/>
    <property type="match status" value="1"/>
</dbReference>
<dbReference type="PANTHER" id="PTHR30363:SF58">
    <property type="entry name" value="REGULATORY PROTEIN, DEOR FAMILY"/>
    <property type="match status" value="1"/>
</dbReference>
<dbReference type="Pfam" id="PF00455">
    <property type="entry name" value="DeoRC"/>
    <property type="match status" value="1"/>
</dbReference>
<dbReference type="Pfam" id="PF08220">
    <property type="entry name" value="HTH_DeoR"/>
    <property type="match status" value="1"/>
</dbReference>
<dbReference type="PRINTS" id="PR00037">
    <property type="entry name" value="HTHLACR"/>
</dbReference>
<dbReference type="SMART" id="SM01134">
    <property type="entry name" value="DeoRC"/>
    <property type="match status" value="1"/>
</dbReference>
<dbReference type="SMART" id="SM00420">
    <property type="entry name" value="HTH_DEOR"/>
    <property type="match status" value="1"/>
</dbReference>
<dbReference type="SUPFAM" id="SSF100950">
    <property type="entry name" value="NagB/RpiA/CoA transferase-like"/>
    <property type="match status" value="1"/>
</dbReference>
<dbReference type="SUPFAM" id="SSF46785">
    <property type="entry name" value="Winged helix' DNA-binding domain"/>
    <property type="match status" value="1"/>
</dbReference>
<dbReference type="PROSITE" id="PS00894">
    <property type="entry name" value="HTH_DEOR_1"/>
    <property type="match status" value="1"/>
</dbReference>
<dbReference type="PROSITE" id="PS51000">
    <property type="entry name" value="HTH_DEOR_2"/>
    <property type="match status" value="1"/>
</dbReference>
<gene>
    <name type="ordered locus">HI_1009</name>
</gene>
<organism>
    <name type="scientific">Haemophilus influenzae (strain ATCC 51907 / DSM 11121 / KW20 / Rd)</name>
    <dbReference type="NCBI Taxonomy" id="71421"/>
    <lineage>
        <taxon>Bacteria</taxon>
        <taxon>Pseudomonadati</taxon>
        <taxon>Pseudomonadota</taxon>
        <taxon>Gammaproteobacteria</taxon>
        <taxon>Pasteurellales</taxon>
        <taxon>Pasteurellaceae</taxon>
        <taxon>Haemophilus</taxon>
    </lineage>
</organism>
<protein>
    <recommendedName>
        <fullName>Uncharacterized HTH-type transcriptional regulator HI_1009</fullName>
    </recommendedName>
</protein>
<proteinExistence type="predicted"/>
<evidence type="ECO:0000255" key="1">
    <source>
        <dbReference type="PROSITE-ProRule" id="PRU00349"/>
    </source>
</evidence>
<reference key="1">
    <citation type="journal article" date="1995" name="Science">
        <title>Whole-genome random sequencing and assembly of Haemophilus influenzae Rd.</title>
        <authorList>
            <person name="Fleischmann R.D."/>
            <person name="Adams M.D."/>
            <person name="White O."/>
            <person name="Clayton R.A."/>
            <person name="Kirkness E.F."/>
            <person name="Kerlavage A.R."/>
            <person name="Bult C.J."/>
            <person name="Tomb J.-F."/>
            <person name="Dougherty B.A."/>
            <person name="Merrick J.M."/>
            <person name="McKenney K."/>
            <person name="Sutton G.G."/>
            <person name="FitzHugh W."/>
            <person name="Fields C.A."/>
            <person name="Gocayne J.D."/>
            <person name="Scott J.D."/>
            <person name="Shirley R."/>
            <person name="Liu L.-I."/>
            <person name="Glodek A."/>
            <person name="Kelley J.M."/>
            <person name="Weidman J.F."/>
            <person name="Phillips C.A."/>
            <person name="Spriggs T."/>
            <person name="Hedblom E."/>
            <person name="Cotton M.D."/>
            <person name="Utterback T.R."/>
            <person name="Hanna M.C."/>
            <person name="Nguyen D.T."/>
            <person name="Saudek D.M."/>
            <person name="Brandon R.C."/>
            <person name="Fine L.D."/>
            <person name="Fritchman J.L."/>
            <person name="Fuhrmann J.L."/>
            <person name="Geoghagen N.S.M."/>
            <person name="Gnehm C.L."/>
            <person name="McDonald L.A."/>
            <person name="Small K.V."/>
            <person name="Fraser C.M."/>
            <person name="Smith H.O."/>
            <person name="Venter J.C."/>
        </authorList>
    </citation>
    <scope>NUCLEOTIDE SEQUENCE [LARGE SCALE GENOMIC DNA]</scope>
    <source>
        <strain>ATCC 51907 / DSM 11121 / KW20 / Rd</strain>
    </source>
</reference>
<reference key="2">
    <citation type="submission" date="1996-09" db="EMBL/GenBank/DDBJ databases">
        <authorList>
            <person name="White O."/>
            <person name="Clayton R.A."/>
            <person name="Kerlavage A.R."/>
            <person name="Fleischmann R.D."/>
        </authorList>
    </citation>
    <scope>SEQUENCE REVISION</scope>
</reference>
<accession>P44978</accession>
<keyword id="KW-0238">DNA-binding</keyword>
<keyword id="KW-1185">Reference proteome</keyword>
<keyword id="KW-0804">Transcription</keyword>
<keyword id="KW-0805">Transcription regulation</keyword>
<sequence>MEKKMIPAERQKTLLNLISKQSVISINNLVNILGVSHMTVRRDIQKLEEDGKVISVSGGVQLLERLSSEPTHDDKSLLATTEKTAISKKAVELIQEHSTIYLDAGTTTLEIAKQIANRNDLLVITNDFVIAHYLMVNSQCNIMHTGGLINKSNRSSVGEFAAQFLHQISVDIAFISTSSWNLKGLTTPDEQKIPVKKAIIQFSQKNILVTDSSKYGKVATFLLYPLSSLDTIICDKGLPENAQARIAEMNVELFLV</sequence>
<name>Y1009_HAEIN</name>
<feature type="chain" id="PRO_0000050275" description="Uncharacterized HTH-type transcriptional regulator HI_1009">
    <location>
        <begin position="1"/>
        <end position="256"/>
    </location>
</feature>
<feature type="domain" description="HTH deoR-type" evidence="1">
    <location>
        <begin position="7"/>
        <end position="62"/>
    </location>
</feature>
<feature type="DNA-binding region" description="H-T-H motif" evidence="1">
    <location>
        <begin position="24"/>
        <end position="43"/>
    </location>
</feature>